<organism>
    <name type="scientific">Methanosarcina mazei (strain ATCC BAA-159 / DSM 3647 / Goe1 / Go1 / JCM 11833 / OCM 88)</name>
    <name type="common">Methanosarcina frisia</name>
    <dbReference type="NCBI Taxonomy" id="192952"/>
    <lineage>
        <taxon>Archaea</taxon>
        <taxon>Methanobacteriati</taxon>
        <taxon>Methanobacteriota</taxon>
        <taxon>Stenosarchaea group</taxon>
        <taxon>Methanomicrobia</taxon>
        <taxon>Methanosarcinales</taxon>
        <taxon>Methanosarcinaceae</taxon>
        <taxon>Methanosarcina</taxon>
    </lineage>
</organism>
<proteinExistence type="inferred from homology"/>
<comment type="function">
    <text evidence="1">Catalyzes the reduction of hydroxylamine to form NH(3) and H(2)O.</text>
</comment>
<comment type="catalytic activity">
    <reaction evidence="1">
        <text>A + NH4(+) + H2O = hydroxylamine + AH2 + H(+)</text>
        <dbReference type="Rhea" id="RHEA:22052"/>
        <dbReference type="ChEBI" id="CHEBI:13193"/>
        <dbReference type="ChEBI" id="CHEBI:15377"/>
        <dbReference type="ChEBI" id="CHEBI:15378"/>
        <dbReference type="ChEBI" id="CHEBI:15429"/>
        <dbReference type="ChEBI" id="CHEBI:17499"/>
        <dbReference type="ChEBI" id="CHEBI:28938"/>
        <dbReference type="EC" id="1.7.99.1"/>
    </reaction>
</comment>
<comment type="cofactor">
    <cofactor evidence="1">
        <name>[4Fe-4S] cluster</name>
        <dbReference type="ChEBI" id="CHEBI:49883"/>
    </cofactor>
    <text evidence="1">Binds 1 [4Fe-4S] cluster.</text>
</comment>
<comment type="cofactor">
    <cofactor evidence="1">
        <name>hybrid [4Fe-2O-2S] cluster</name>
        <dbReference type="ChEBI" id="CHEBI:60519"/>
    </cofactor>
    <text evidence="1">Binds 1 hybrid [4Fe-2O-2S] cluster.</text>
</comment>
<comment type="subcellular location">
    <subcellularLocation>
        <location evidence="1">Cytoplasm</location>
    </subcellularLocation>
</comment>
<comment type="similarity">
    <text evidence="1">Belongs to the HCP family.</text>
</comment>
<gene>
    <name evidence="1" type="primary">hcp</name>
    <name type="ordered locus">MM_3213</name>
</gene>
<protein>
    <recommendedName>
        <fullName evidence="1">Hydroxylamine reductase</fullName>
        <ecNumber evidence="1">1.7.99.1</ecNumber>
    </recommendedName>
    <alternativeName>
        <fullName evidence="1">Hybrid-cluster protein</fullName>
        <shortName evidence="1">HCP</shortName>
    </alternativeName>
    <alternativeName>
        <fullName evidence="1">Prismane protein</fullName>
    </alternativeName>
</protein>
<sequence length="540" mass="59351">MFCNQCQEALNVIGCTKNGVCGKKGEVADLQDRLLYVLKSVSYYNLKARELGLNEETADKIVLDAFFATLTNTNFDKQAIESYIKKGFEIRDSIKAKLPAGTLPAEEDLPDVAKVTPENITGMDVAVHSTQNEDVRSLRELLTYGMKGMAAYAHHAYILGYKDEEIFKFIEKGLVATTDDTIGVDDLIGLVLECGQKGVSVLALLDKANTETYGSPEPTAVNIGVRGNPGILISGHDLLDLEQLLEQTKGTGIDVYTHGEMLPANSYPAFKKYDNFAGNYGNAWWRQNEEFEKFNGPVLMTTNCIIPPRESYRNRIYTTGVVGFEGLPHIHEKEDGTKDFTSLIEQAKMSKPPEQLESGTIMGGFAHEAALSVADKIIDAVKTGKISRFMVMAGCDGRHKERAYYTEFAKALPENTVILTAGCAKYRYNKLDLGDIGGIPRVLDAGQCNDCYSLVVIAQKLAEAFGLEDINDLPISYNIAWYEQKAVLVLLALLSLGVKNIVLGPTLPAFVSPNVLKVLVDNFNIRPNTTVEEDMKVLLG</sequence>
<evidence type="ECO:0000255" key="1">
    <source>
        <dbReference type="HAMAP-Rule" id="MF_00069"/>
    </source>
</evidence>
<reference key="1">
    <citation type="journal article" date="2002" name="J. Mol. Microbiol. Biotechnol.">
        <title>The genome of Methanosarcina mazei: evidence for lateral gene transfer between Bacteria and Archaea.</title>
        <authorList>
            <person name="Deppenmeier U."/>
            <person name="Johann A."/>
            <person name="Hartsch T."/>
            <person name="Merkl R."/>
            <person name="Schmitz R.A."/>
            <person name="Martinez-Arias R."/>
            <person name="Henne A."/>
            <person name="Wiezer A."/>
            <person name="Baeumer S."/>
            <person name="Jacobi C."/>
            <person name="Brueggemann H."/>
            <person name="Lienard T."/>
            <person name="Christmann A."/>
            <person name="Boemecke M."/>
            <person name="Steckel S."/>
            <person name="Bhattacharyya A."/>
            <person name="Lykidis A."/>
            <person name="Overbeek R."/>
            <person name="Klenk H.-P."/>
            <person name="Gunsalus R.P."/>
            <person name="Fritz H.-J."/>
            <person name="Gottschalk G."/>
        </authorList>
    </citation>
    <scope>NUCLEOTIDE SEQUENCE [LARGE SCALE GENOMIC DNA]</scope>
    <source>
        <strain>ATCC BAA-159 / DSM 3647 / Goe1 / Go1 / JCM 11833 / OCM 88</strain>
    </source>
</reference>
<keyword id="KW-0004">4Fe-4S</keyword>
<keyword id="KW-0963">Cytoplasm</keyword>
<keyword id="KW-0408">Iron</keyword>
<keyword id="KW-0411">Iron-sulfur</keyword>
<keyword id="KW-0479">Metal-binding</keyword>
<keyword id="KW-0560">Oxidoreductase</keyword>
<dbReference type="EC" id="1.7.99.1" evidence="1"/>
<dbReference type="EMBL" id="AE008384">
    <property type="protein sequence ID" value="AAM32909.1"/>
    <property type="molecule type" value="Genomic_DNA"/>
</dbReference>
<dbReference type="RefSeq" id="WP_011035108.1">
    <property type="nucleotide sequence ID" value="NC_003901.1"/>
</dbReference>
<dbReference type="SMR" id="Q8PS69"/>
<dbReference type="GeneID" id="82162316"/>
<dbReference type="KEGG" id="mma:MM_3213"/>
<dbReference type="PATRIC" id="fig|192952.21.peg.3733"/>
<dbReference type="eggNOG" id="arCOG02430">
    <property type="taxonomic scope" value="Archaea"/>
</dbReference>
<dbReference type="HOGENOM" id="CLU_038344_2_0_2"/>
<dbReference type="Proteomes" id="UP000000595">
    <property type="component" value="Chromosome"/>
</dbReference>
<dbReference type="GO" id="GO:0005737">
    <property type="term" value="C:cytoplasm"/>
    <property type="evidence" value="ECO:0007669"/>
    <property type="project" value="UniProtKB-SubCell"/>
</dbReference>
<dbReference type="GO" id="GO:0051539">
    <property type="term" value="F:4 iron, 4 sulfur cluster binding"/>
    <property type="evidence" value="ECO:0007669"/>
    <property type="project" value="UniProtKB-KW"/>
</dbReference>
<dbReference type="GO" id="GO:0050418">
    <property type="term" value="F:hydroxylamine reductase activity"/>
    <property type="evidence" value="ECO:0007669"/>
    <property type="project" value="UniProtKB-UniRule"/>
</dbReference>
<dbReference type="GO" id="GO:0046872">
    <property type="term" value="F:metal ion binding"/>
    <property type="evidence" value="ECO:0007669"/>
    <property type="project" value="UniProtKB-KW"/>
</dbReference>
<dbReference type="GO" id="GO:0004601">
    <property type="term" value="F:peroxidase activity"/>
    <property type="evidence" value="ECO:0007669"/>
    <property type="project" value="TreeGrafter"/>
</dbReference>
<dbReference type="GO" id="GO:0042542">
    <property type="term" value="P:response to hydrogen peroxide"/>
    <property type="evidence" value="ECO:0007669"/>
    <property type="project" value="TreeGrafter"/>
</dbReference>
<dbReference type="CDD" id="cd01914">
    <property type="entry name" value="HCP"/>
    <property type="match status" value="1"/>
</dbReference>
<dbReference type="FunFam" id="1.20.1270.20:FF:000001">
    <property type="entry name" value="Hydroxylamine reductase"/>
    <property type="match status" value="1"/>
</dbReference>
<dbReference type="FunFam" id="3.40.50.2030:FF:000001">
    <property type="entry name" value="Hydroxylamine reductase"/>
    <property type="match status" value="1"/>
</dbReference>
<dbReference type="FunFam" id="3.40.50.2030:FF:000002">
    <property type="entry name" value="Hydroxylamine reductase"/>
    <property type="match status" value="1"/>
</dbReference>
<dbReference type="Gene3D" id="1.20.1270.20">
    <property type="match status" value="2"/>
</dbReference>
<dbReference type="Gene3D" id="3.40.50.2030">
    <property type="match status" value="2"/>
</dbReference>
<dbReference type="HAMAP" id="MF_00069">
    <property type="entry name" value="Hydroxylam_reduct"/>
    <property type="match status" value="1"/>
</dbReference>
<dbReference type="InterPro" id="IPR004137">
    <property type="entry name" value="HCP/CODH"/>
</dbReference>
<dbReference type="InterPro" id="IPR010048">
    <property type="entry name" value="Hydroxylam_reduct"/>
</dbReference>
<dbReference type="InterPro" id="IPR016099">
    <property type="entry name" value="Prismane-like_a/b-sand"/>
</dbReference>
<dbReference type="InterPro" id="IPR011254">
    <property type="entry name" value="Prismane-like_sf"/>
</dbReference>
<dbReference type="InterPro" id="IPR016100">
    <property type="entry name" value="Prismane_a-bundle"/>
</dbReference>
<dbReference type="NCBIfam" id="TIGR01703">
    <property type="entry name" value="hybrid_clust"/>
    <property type="match status" value="1"/>
</dbReference>
<dbReference type="NCBIfam" id="NF003658">
    <property type="entry name" value="PRK05290.1"/>
    <property type="match status" value="1"/>
</dbReference>
<dbReference type="PANTHER" id="PTHR30109">
    <property type="entry name" value="HYDROXYLAMINE REDUCTASE"/>
    <property type="match status" value="1"/>
</dbReference>
<dbReference type="PANTHER" id="PTHR30109:SF0">
    <property type="entry name" value="HYDROXYLAMINE REDUCTASE"/>
    <property type="match status" value="1"/>
</dbReference>
<dbReference type="Pfam" id="PF03063">
    <property type="entry name" value="Prismane"/>
    <property type="match status" value="1"/>
</dbReference>
<dbReference type="PIRSF" id="PIRSF000076">
    <property type="entry name" value="HCP"/>
    <property type="match status" value="1"/>
</dbReference>
<dbReference type="SUPFAM" id="SSF56821">
    <property type="entry name" value="Prismane protein-like"/>
    <property type="match status" value="1"/>
</dbReference>
<feature type="chain" id="PRO_0000151692" description="Hydroxylamine reductase">
    <location>
        <begin position="1"/>
        <end position="540"/>
    </location>
</feature>
<feature type="binding site" evidence="1">
    <location>
        <position position="3"/>
    </location>
    <ligand>
        <name>[4Fe-4S] cluster</name>
        <dbReference type="ChEBI" id="CHEBI:49883"/>
    </ligand>
</feature>
<feature type="binding site" evidence="1">
    <location>
        <position position="6"/>
    </location>
    <ligand>
        <name>[4Fe-4S] cluster</name>
        <dbReference type="ChEBI" id="CHEBI:49883"/>
    </ligand>
</feature>
<feature type="binding site" evidence="1">
    <location>
        <position position="15"/>
    </location>
    <ligand>
        <name>[4Fe-4S] cluster</name>
        <dbReference type="ChEBI" id="CHEBI:49883"/>
    </ligand>
</feature>
<feature type="binding site" evidence="1">
    <location>
        <position position="21"/>
    </location>
    <ligand>
        <name>[4Fe-4S] cluster</name>
        <dbReference type="ChEBI" id="CHEBI:49883"/>
    </ligand>
</feature>
<feature type="binding site" evidence="1">
    <location>
        <position position="236"/>
    </location>
    <ligand>
        <name>hybrid [4Fe-2O-2S] cluster</name>
        <dbReference type="ChEBI" id="CHEBI:60519"/>
    </ligand>
</feature>
<feature type="binding site" evidence="1">
    <location>
        <position position="260"/>
    </location>
    <ligand>
        <name>hybrid [4Fe-2O-2S] cluster</name>
        <dbReference type="ChEBI" id="CHEBI:60519"/>
    </ligand>
</feature>
<feature type="binding site" evidence="1">
    <location>
        <position position="304"/>
    </location>
    <ligand>
        <name>hybrid [4Fe-2O-2S] cluster</name>
        <dbReference type="ChEBI" id="CHEBI:60519"/>
    </ligand>
</feature>
<feature type="binding site" description="via persulfide group" evidence="1">
    <location>
        <position position="395"/>
    </location>
    <ligand>
        <name>hybrid [4Fe-2O-2S] cluster</name>
        <dbReference type="ChEBI" id="CHEBI:60519"/>
    </ligand>
</feature>
<feature type="binding site" evidence="1">
    <location>
        <position position="423"/>
    </location>
    <ligand>
        <name>hybrid [4Fe-2O-2S] cluster</name>
        <dbReference type="ChEBI" id="CHEBI:60519"/>
    </ligand>
</feature>
<feature type="binding site" evidence="1">
    <location>
        <position position="448"/>
    </location>
    <ligand>
        <name>hybrid [4Fe-2O-2S] cluster</name>
        <dbReference type="ChEBI" id="CHEBI:60519"/>
    </ligand>
</feature>
<feature type="binding site" evidence="1">
    <location>
        <position position="483"/>
    </location>
    <ligand>
        <name>hybrid [4Fe-2O-2S] cluster</name>
        <dbReference type="ChEBI" id="CHEBI:60519"/>
    </ligand>
</feature>
<feature type="binding site" evidence="1">
    <location>
        <position position="485"/>
    </location>
    <ligand>
        <name>hybrid [4Fe-2O-2S] cluster</name>
        <dbReference type="ChEBI" id="CHEBI:60519"/>
    </ligand>
</feature>
<feature type="modified residue" description="Cysteine persulfide" evidence="1">
    <location>
        <position position="395"/>
    </location>
</feature>
<accession>Q8PS69</accession>
<name>HCP_METMA</name>